<keyword id="KW-1185">Reference proteome</keyword>
<keyword id="KW-0687">Ribonucleoprotein</keyword>
<keyword id="KW-0689">Ribosomal protein</keyword>
<protein>
    <recommendedName>
        <fullName evidence="1">Small ribosomal subunit protein uS9</fullName>
    </recommendedName>
    <alternativeName>
        <fullName evidence="2">30S ribosomal protein S9</fullName>
    </alternativeName>
</protein>
<organism>
    <name type="scientific">Escherichia coli O139:H28 (strain E24377A / ETEC)</name>
    <dbReference type="NCBI Taxonomy" id="331111"/>
    <lineage>
        <taxon>Bacteria</taxon>
        <taxon>Pseudomonadati</taxon>
        <taxon>Pseudomonadota</taxon>
        <taxon>Gammaproteobacteria</taxon>
        <taxon>Enterobacterales</taxon>
        <taxon>Enterobacteriaceae</taxon>
        <taxon>Escherichia</taxon>
    </lineage>
</organism>
<proteinExistence type="inferred from homology"/>
<comment type="similarity">
    <text evidence="1">Belongs to the universal ribosomal protein uS9 family.</text>
</comment>
<gene>
    <name evidence="1" type="primary">rpsI</name>
    <name type="ordered locus">EcE24377A_3713</name>
</gene>
<name>RS9_ECO24</name>
<evidence type="ECO:0000255" key="1">
    <source>
        <dbReference type="HAMAP-Rule" id="MF_00532"/>
    </source>
</evidence>
<evidence type="ECO:0000305" key="2"/>
<sequence length="130" mass="14856">MAENQYYGTGRRKSSAARVFIKPGNGKIVINQRSLEQYFGRETARMVVRQPLELVDMVEKLDLYITVKGGGISGQAGAIRHGITRALMEYDESLRSELRKAGFVTRDARQVERKKVGLRKARRRPQFSKR</sequence>
<accession>A7ZSC4</accession>
<reference key="1">
    <citation type="journal article" date="2008" name="J. Bacteriol.">
        <title>The pangenome structure of Escherichia coli: comparative genomic analysis of E. coli commensal and pathogenic isolates.</title>
        <authorList>
            <person name="Rasko D.A."/>
            <person name="Rosovitz M.J."/>
            <person name="Myers G.S.A."/>
            <person name="Mongodin E.F."/>
            <person name="Fricke W.F."/>
            <person name="Gajer P."/>
            <person name="Crabtree J."/>
            <person name="Sebaihia M."/>
            <person name="Thomson N.R."/>
            <person name="Chaudhuri R."/>
            <person name="Henderson I.R."/>
            <person name="Sperandio V."/>
            <person name="Ravel J."/>
        </authorList>
    </citation>
    <scope>NUCLEOTIDE SEQUENCE [LARGE SCALE GENOMIC DNA]</scope>
    <source>
        <strain>E24377A / ETEC</strain>
    </source>
</reference>
<feature type="chain" id="PRO_1000061001" description="Small ribosomal subunit protein uS9">
    <location>
        <begin position="1"/>
        <end position="130"/>
    </location>
</feature>
<dbReference type="EMBL" id="CP000800">
    <property type="protein sequence ID" value="ABV19513.1"/>
    <property type="molecule type" value="Genomic_DNA"/>
</dbReference>
<dbReference type="RefSeq" id="WP_000829818.1">
    <property type="nucleotide sequence ID" value="NC_009801.1"/>
</dbReference>
<dbReference type="SMR" id="A7ZSC4"/>
<dbReference type="GeneID" id="98390344"/>
<dbReference type="KEGG" id="ecw:EcE24377A_3713"/>
<dbReference type="HOGENOM" id="CLU_046483_2_1_6"/>
<dbReference type="Proteomes" id="UP000001122">
    <property type="component" value="Chromosome"/>
</dbReference>
<dbReference type="GO" id="GO:0022627">
    <property type="term" value="C:cytosolic small ribosomal subunit"/>
    <property type="evidence" value="ECO:0007669"/>
    <property type="project" value="TreeGrafter"/>
</dbReference>
<dbReference type="GO" id="GO:0003723">
    <property type="term" value="F:RNA binding"/>
    <property type="evidence" value="ECO:0007669"/>
    <property type="project" value="TreeGrafter"/>
</dbReference>
<dbReference type="GO" id="GO:0003735">
    <property type="term" value="F:structural constituent of ribosome"/>
    <property type="evidence" value="ECO:0007669"/>
    <property type="project" value="InterPro"/>
</dbReference>
<dbReference type="GO" id="GO:0006412">
    <property type="term" value="P:translation"/>
    <property type="evidence" value="ECO:0007669"/>
    <property type="project" value="UniProtKB-UniRule"/>
</dbReference>
<dbReference type="FunFam" id="3.30.230.10:FF:000001">
    <property type="entry name" value="30S ribosomal protein S9"/>
    <property type="match status" value="1"/>
</dbReference>
<dbReference type="Gene3D" id="3.30.230.10">
    <property type="match status" value="1"/>
</dbReference>
<dbReference type="HAMAP" id="MF_00532_B">
    <property type="entry name" value="Ribosomal_uS9_B"/>
    <property type="match status" value="1"/>
</dbReference>
<dbReference type="InterPro" id="IPR020568">
    <property type="entry name" value="Ribosomal_Su5_D2-typ_SF"/>
</dbReference>
<dbReference type="InterPro" id="IPR000754">
    <property type="entry name" value="Ribosomal_uS9"/>
</dbReference>
<dbReference type="InterPro" id="IPR023035">
    <property type="entry name" value="Ribosomal_uS9_bac/plastid"/>
</dbReference>
<dbReference type="InterPro" id="IPR020574">
    <property type="entry name" value="Ribosomal_uS9_CS"/>
</dbReference>
<dbReference type="InterPro" id="IPR014721">
    <property type="entry name" value="Ribsml_uS5_D2-typ_fold_subgr"/>
</dbReference>
<dbReference type="NCBIfam" id="NF001099">
    <property type="entry name" value="PRK00132.1"/>
    <property type="match status" value="1"/>
</dbReference>
<dbReference type="PANTHER" id="PTHR21569">
    <property type="entry name" value="RIBOSOMAL PROTEIN S9"/>
    <property type="match status" value="1"/>
</dbReference>
<dbReference type="PANTHER" id="PTHR21569:SF1">
    <property type="entry name" value="SMALL RIBOSOMAL SUBUNIT PROTEIN US9M"/>
    <property type="match status" value="1"/>
</dbReference>
<dbReference type="Pfam" id="PF00380">
    <property type="entry name" value="Ribosomal_S9"/>
    <property type="match status" value="1"/>
</dbReference>
<dbReference type="SUPFAM" id="SSF54211">
    <property type="entry name" value="Ribosomal protein S5 domain 2-like"/>
    <property type="match status" value="1"/>
</dbReference>
<dbReference type="PROSITE" id="PS00360">
    <property type="entry name" value="RIBOSOMAL_S9"/>
    <property type="match status" value="1"/>
</dbReference>